<protein>
    <recommendedName>
        <fullName>Tryptophyllin-T3-1</fullName>
        <shortName evidence="3">Pj-T3-1</shortName>
    </recommendedName>
</protein>
<name>TY31_PHAJA</name>
<comment type="subcellular location">
    <subcellularLocation>
        <location evidence="2">Secreted</location>
    </subcellularLocation>
</comment>
<comment type="tissue specificity">
    <text evidence="2">Expressed by the skin glands.</text>
</comment>
<comment type="mass spectrometry" mass="1555.9" method="MALDI" evidence="2"/>
<comment type="similarity">
    <text evidence="1">Belongs to the frog skin active peptide (FSAP) family. Tryptophillin subfamily.</text>
</comment>
<proteinExistence type="evidence at protein level"/>
<dbReference type="GO" id="GO:0005576">
    <property type="term" value="C:extracellular region"/>
    <property type="evidence" value="ECO:0007669"/>
    <property type="project" value="UniProtKB-SubCell"/>
</dbReference>
<dbReference type="GO" id="GO:0006952">
    <property type="term" value="P:defense response"/>
    <property type="evidence" value="ECO:0007669"/>
    <property type="project" value="UniProtKB-KW"/>
</dbReference>
<dbReference type="InterPro" id="IPR013266">
    <property type="entry name" value="Tryptophillin"/>
</dbReference>
<dbReference type="Pfam" id="PF08248">
    <property type="entry name" value="Tryp_FSAP"/>
    <property type="match status" value="1"/>
</dbReference>
<reference evidence="4" key="1">
    <citation type="journal article" date="2011" name="Toxicon">
        <title>Peptidomic dissection of the skin secretion of Phasmahyla jandaia (Bokermann and Sazima, 1978) (Anura, Hylidae, Phyllomedusinae).</title>
        <authorList>
            <person name="Rates B."/>
            <person name="Silva L.P."/>
            <person name="Ireno I.C."/>
            <person name="Leite F.S."/>
            <person name="Borges M.H."/>
            <person name="Bloch C. Jr."/>
            <person name="De Lima M.E."/>
            <person name="Pimenta A.M."/>
        </authorList>
    </citation>
    <scope>PROTEIN SEQUENCE</scope>
    <scope>SUBCELLULAR LOCATION</scope>
    <scope>TISSUE SPECIFICITY</scope>
    <scope>MASS SPECTROMETRY</scope>
    <scope>PYROGLUTAMATE FORMATION AT GLN-1</scope>
    <source>
        <tissue evidence="2">Skin secretion</tissue>
    </source>
</reference>
<keyword id="KW-0878">Amphibian defense peptide</keyword>
<keyword id="KW-0903">Direct protein sequencing</keyword>
<keyword id="KW-0873">Pyrrolidone carboxylic acid</keyword>
<keyword id="KW-0964">Secreted</keyword>
<feature type="peptide" id="PRO_0000404627" description="Tryptophyllin-T3-1" evidence="2">
    <location>
        <begin position="1"/>
        <end position="13"/>
    </location>
</feature>
<feature type="modified residue" description="Pyrrolidone carboxylic acid" evidence="2">
    <location>
        <position position="1"/>
    </location>
</feature>
<feature type="unsure residue" description="K or Q" evidence="2">
    <location>
        <position position="3"/>
    </location>
</feature>
<feature type="unsure residue" description="I or L" evidence="2">
    <location>
        <position position="10"/>
    </location>
</feature>
<organism>
    <name type="scientific">Phasmahyla jandaia</name>
    <name type="common">Jandaia leaf frog</name>
    <name type="synonym">Phyllomedusa jandaia</name>
    <dbReference type="NCBI Taxonomy" id="762504"/>
    <lineage>
        <taxon>Eukaryota</taxon>
        <taxon>Metazoa</taxon>
        <taxon>Chordata</taxon>
        <taxon>Craniata</taxon>
        <taxon>Vertebrata</taxon>
        <taxon>Euteleostomi</taxon>
        <taxon>Amphibia</taxon>
        <taxon>Batrachia</taxon>
        <taxon>Anura</taxon>
        <taxon>Neobatrachia</taxon>
        <taxon>Hyloidea</taxon>
        <taxon>Hylidae</taxon>
        <taxon>Phyllomedusinae</taxon>
        <taxon>Phasmahyla</taxon>
    </lineage>
</organism>
<evidence type="ECO:0000255" key="1"/>
<evidence type="ECO:0000269" key="2">
    <source>
    </source>
</evidence>
<evidence type="ECO:0000303" key="3">
    <source>
    </source>
</evidence>
<evidence type="ECO:0000305" key="4"/>
<accession>P86610</accession>
<sequence length="13" mass="1574">QDKPFWSPPIYPV</sequence>